<feature type="chain" id="PRO_0000061441" description="Cytochrome b">
    <location>
        <begin position="1"/>
        <end position="380"/>
    </location>
</feature>
<feature type="transmembrane region" description="Helical" evidence="2">
    <location>
        <begin position="34"/>
        <end position="54"/>
    </location>
</feature>
<feature type="transmembrane region" description="Helical" evidence="2">
    <location>
        <begin position="78"/>
        <end position="99"/>
    </location>
</feature>
<feature type="transmembrane region" description="Helical" evidence="2">
    <location>
        <begin position="114"/>
        <end position="134"/>
    </location>
</feature>
<feature type="transmembrane region" description="Helical" evidence="2">
    <location>
        <begin position="179"/>
        <end position="199"/>
    </location>
</feature>
<feature type="transmembrane region" description="Helical" evidence="2">
    <location>
        <begin position="227"/>
        <end position="247"/>
    </location>
</feature>
<feature type="transmembrane region" description="Helical" evidence="2">
    <location>
        <begin position="289"/>
        <end position="309"/>
    </location>
</feature>
<feature type="transmembrane region" description="Helical" evidence="2">
    <location>
        <begin position="321"/>
        <end position="341"/>
    </location>
</feature>
<feature type="transmembrane region" description="Helical" evidence="2">
    <location>
        <begin position="348"/>
        <end position="368"/>
    </location>
</feature>
<feature type="binding site" description="axial binding residue" evidence="2">
    <location>
        <position position="84"/>
    </location>
    <ligand>
        <name>heme b</name>
        <dbReference type="ChEBI" id="CHEBI:60344"/>
        <label>b562</label>
    </ligand>
    <ligandPart>
        <name>Fe</name>
        <dbReference type="ChEBI" id="CHEBI:18248"/>
    </ligandPart>
</feature>
<feature type="binding site" description="axial binding residue" evidence="2">
    <location>
        <position position="98"/>
    </location>
    <ligand>
        <name>heme b</name>
        <dbReference type="ChEBI" id="CHEBI:60344"/>
        <label>b566</label>
    </ligand>
    <ligandPart>
        <name>Fe</name>
        <dbReference type="ChEBI" id="CHEBI:18248"/>
    </ligandPart>
</feature>
<feature type="binding site" description="axial binding residue" evidence="2">
    <location>
        <position position="183"/>
    </location>
    <ligand>
        <name>heme b</name>
        <dbReference type="ChEBI" id="CHEBI:60344"/>
        <label>b562</label>
    </ligand>
    <ligandPart>
        <name>Fe</name>
        <dbReference type="ChEBI" id="CHEBI:18248"/>
    </ligandPart>
</feature>
<feature type="binding site" description="axial binding residue" evidence="2">
    <location>
        <position position="197"/>
    </location>
    <ligand>
        <name>heme b</name>
        <dbReference type="ChEBI" id="CHEBI:60344"/>
        <label>b566</label>
    </ligand>
    <ligandPart>
        <name>Fe</name>
        <dbReference type="ChEBI" id="CHEBI:18248"/>
    </ligandPart>
</feature>
<feature type="binding site" evidence="2">
    <location>
        <position position="202"/>
    </location>
    <ligand>
        <name>a ubiquinone</name>
        <dbReference type="ChEBI" id="CHEBI:16389"/>
    </ligand>
</feature>
<reference key="1">
    <citation type="journal article" date="1998" name="Mol. Biol. Evol.">
        <title>Body size effects and rates of cytochrome-b evolution in tube-nosed seabirds.</title>
        <authorList>
            <person name="Nunn G.B."/>
            <person name="Stanley S.E."/>
        </authorList>
    </citation>
    <scope>NUCLEOTIDE SEQUENCE [GENOMIC DNA]</scope>
    <source>
        <strain>Isolate Procpark</strain>
    </source>
</reference>
<comment type="function">
    <text evidence="2">Component of the ubiquinol-cytochrome c reductase complex (complex III or cytochrome b-c1 complex) that is part of the mitochondrial respiratory chain. The b-c1 complex mediates electron transfer from ubiquinol to cytochrome c. Contributes to the generation of a proton gradient across the mitochondrial membrane that is then used for ATP synthesis.</text>
</comment>
<comment type="cofactor">
    <cofactor evidence="2">
        <name>heme b</name>
        <dbReference type="ChEBI" id="CHEBI:60344"/>
    </cofactor>
    <text evidence="2">Binds 2 heme b groups non-covalently.</text>
</comment>
<comment type="subunit">
    <text evidence="2">The cytochrome bc1 complex contains 11 subunits: 3 respiratory subunits (MT-CYB, CYC1 and UQCRFS1), 2 core proteins (UQCRC1 and UQCRC2) and 6 low-molecular weight proteins (UQCRH/QCR6, UQCRB/QCR7, UQCRQ/QCR8, UQCR10/QCR9, UQCR11/QCR10 and a cleavage product of UQCRFS1). This cytochrome bc1 complex then forms a dimer.</text>
</comment>
<comment type="subcellular location">
    <subcellularLocation>
        <location evidence="2">Mitochondrion inner membrane</location>
        <topology evidence="2">Multi-pass membrane protein</topology>
    </subcellularLocation>
</comment>
<comment type="miscellaneous">
    <text evidence="1">Heme 1 (or BL or b562) is low-potential and absorbs at about 562 nm, and heme 2 (or BH or b566) is high-potential and absorbs at about 566 nm.</text>
</comment>
<comment type="similarity">
    <text evidence="3 4">Belongs to the cytochrome b family.</text>
</comment>
<comment type="caution">
    <text evidence="2">The full-length protein contains only eight transmembrane helices, not nine as predicted by bioinformatics tools.</text>
</comment>
<accession>O79222</accession>
<sequence>MAPNLRKSHPLLKMINNSLIDLPTPPNISAWWNFGSLLGICLMTQILTGLLLAMHYTADTTLAFSSVAHTCRNVQYGWLIRNLHANGASFFFICIYLHIGRGFYYGSYLYKETWNTGVILLLTLMATAFVGYVLPWGQMSFWGATVITNLFSAIPYIGQTLVEWAWGGFSVDNPTLTRFFALHFLLPFMIAGLTLVHLTFLHESGSNNPLGIVSNCDKIPFHPYFTLKDILGFTLMLLPLTTLALFSPNLLGDPENFTPANPLVTPPHIKPEWYFLFAYAILRSIPNKLGGVLALAASVLILFLAPFLHKAKQRTMTFRPLSQLLFWILVANLFILTWVGSQPVEHPFIIIGQLASFTYFTILLILFPIIGALENKMLNY</sequence>
<keyword id="KW-0249">Electron transport</keyword>
<keyword id="KW-0349">Heme</keyword>
<keyword id="KW-0408">Iron</keyword>
<keyword id="KW-0472">Membrane</keyword>
<keyword id="KW-0479">Metal-binding</keyword>
<keyword id="KW-0496">Mitochondrion</keyword>
<keyword id="KW-0999">Mitochondrion inner membrane</keyword>
<keyword id="KW-0679">Respiratory chain</keyword>
<keyword id="KW-0812">Transmembrane</keyword>
<keyword id="KW-1133">Transmembrane helix</keyword>
<keyword id="KW-0813">Transport</keyword>
<keyword id="KW-0830">Ubiquinone</keyword>
<protein>
    <recommendedName>
        <fullName>Cytochrome b</fullName>
    </recommendedName>
    <alternativeName>
        <fullName>Complex III subunit 3</fullName>
    </alternativeName>
    <alternativeName>
        <fullName>Complex III subunit III</fullName>
    </alternativeName>
    <alternativeName>
        <fullName>Cytochrome b-c1 complex subunit 3</fullName>
    </alternativeName>
    <alternativeName>
        <fullName>Ubiquinol-cytochrome-c reductase complex cytochrome b subunit</fullName>
    </alternativeName>
</protein>
<organism>
    <name type="scientific">Procellaria parkinsoni</name>
    <name type="common">Black petrel</name>
    <dbReference type="NCBI Taxonomy" id="79639"/>
    <lineage>
        <taxon>Eukaryota</taxon>
        <taxon>Metazoa</taxon>
        <taxon>Chordata</taxon>
        <taxon>Craniata</taxon>
        <taxon>Vertebrata</taxon>
        <taxon>Euteleostomi</taxon>
        <taxon>Archelosauria</taxon>
        <taxon>Archosauria</taxon>
        <taxon>Dinosauria</taxon>
        <taxon>Saurischia</taxon>
        <taxon>Theropoda</taxon>
        <taxon>Coelurosauria</taxon>
        <taxon>Aves</taxon>
        <taxon>Neognathae</taxon>
        <taxon>Neoaves</taxon>
        <taxon>Aequornithes</taxon>
        <taxon>Procellariiformes</taxon>
        <taxon>Procellariidae</taxon>
        <taxon>Procellaria</taxon>
    </lineage>
</organism>
<evidence type="ECO:0000250" key="1"/>
<evidence type="ECO:0000250" key="2">
    <source>
        <dbReference type="UniProtKB" id="P00157"/>
    </source>
</evidence>
<evidence type="ECO:0000255" key="3">
    <source>
        <dbReference type="PROSITE-ProRule" id="PRU00967"/>
    </source>
</evidence>
<evidence type="ECO:0000255" key="4">
    <source>
        <dbReference type="PROSITE-ProRule" id="PRU00968"/>
    </source>
</evidence>
<proteinExistence type="inferred from homology"/>
<geneLocation type="mitochondrion"/>
<name>CYB_PROPA</name>
<dbReference type="EMBL" id="AF076077">
    <property type="protein sequence ID" value="AAC68634.1"/>
    <property type="molecule type" value="Genomic_DNA"/>
</dbReference>
<dbReference type="SMR" id="O79222"/>
<dbReference type="GO" id="GO:0005743">
    <property type="term" value="C:mitochondrial inner membrane"/>
    <property type="evidence" value="ECO:0007669"/>
    <property type="project" value="UniProtKB-SubCell"/>
</dbReference>
<dbReference type="GO" id="GO:0045275">
    <property type="term" value="C:respiratory chain complex III"/>
    <property type="evidence" value="ECO:0007669"/>
    <property type="project" value="InterPro"/>
</dbReference>
<dbReference type="GO" id="GO:0046872">
    <property type="term" value="F:metal ion binding"/>
    <property type="evidence" value="ECO:0007669"/>
    <property type="project" value="UniProtKB-KW"/>
</dbReference>
<dbReference type="GO" id="GO:0008121">
    <property type="term" value="F:ubiquinol-cytochrome-c reductase activity"/>
    <property type="evidence" value="ECO:0007669"/>
    <property type="project" value="InterPro"/>
</dbReference>
<dbReference type="GO" id="GO:0006122">
    <property type="term" value="P:mitochondrial electron transport, ubiquinol to cytochrome c"/>
    <property type="evidence" value="ECO:0007669"/>
    <property type="project" value="TreeGrafter"/>
</dbReference>
<dbReference type="CDD" id="cd00290">
    <property type="entry name" value="cytochrome_b_C"/>
    <property type="match status" value="1"/>
</dbReference>
<dbReference type="CDD" id="cd00284">
    <property type="entry name" value="Cytochrome_b_N"/>
    <property type="match status" value="1"/>
</dbReference>
<dbReference type="FunFam" id="1.20.810.10:FF:000002">
    <property type="entry name" value="Cytochrome b"/>
    <property type="match status" value="1"/>
</dbReference>
<dbReference type="Gene3D" id="1.20.810.10">
    <property type="entry name" value="Cytochrome Bc1 Complex, Chain C"/>
    <property type="match status" value="1"/>
</dbReference>
<dbReference type="InterPro" id="IPR005798">
    <property type="entry name" value="Cyt_b/b6_C"/>
</dbReference>
<dbReference type="InterPro" id="IPR036150">
    <property type="entry name" value="Cyt_b/b6_C_sf"/>
</dbReference>
<dbReference type="InterPro" id="IPR005797">
    <property type="entry name" value="Cyt_b/b6_N"/>
</dbReference>
<dbReference type="InterPro" id="IPR027387">
    <property type="entry name" value="Cytb/b6-like_sf"/>
</dbReference>
<dbReference type="InterPro" id="IPR030689">
    <property type="entry name" value="Cytochrome_b"/>
</dbReference>
<dbReference type="InterPro" id="IPR048260">
    <property type="entry name" value="Cytochrome_b_C_euk/bac"/>
</dbReference>
<dbReference type="InterPro" id="IPR048259">
    <property type="entry name" value="Cytochrome_b_N_euk/bac"/>
</dbReference>
<dbReference type="InterPro" id="IPR016174">
    <property type="entry name" value="Di-haem_cyt_TM"/>
</dbReference>
<dbReference type="PANTHER" id="PTHR19271">
    <property type="entry name" value="CYTOCHROME B"/>
    <property type="match status" value="1"/>
</dbReference>
<dbReference type="PANTHER" id="PTHR19271:SF16">
    <property type="entry name" value="CYTOCHROME B"/>
    <property type="match status" value="1"/>
</dbReference>
<dbReference type="Pfam" id="PF00032">
    <property type="entry name" value="Cytochrom_B_C"/>
    <property type="match status" value="1"/>
</dbReference>
<dbReference type="Pfam" id="PF00033">
    <property type="entry name" value="Cytochrome_B"/>
    <property type="match status" value="1"/>
</dbReference>
<dbReference type="PIRSF" id="PIRSF038885">
    <property type="entry name" value="COB"/>
    <property type="match status" value="1"/>
</dbReference>
<dbReference type="SUPFAM" id="SSF81648">
    <property type="entry name" value="a domain/subunit of cytochrome bc1 complex (Ubiquinol-cytochrome c reductase)"/>
    <property type="match status" value="1"/>
</dbReference>
<dbReference type="SUPFAM" id="SSF81342">
    <property type="entry name" value="Transmembrane di-heme cytochromes"/>
    <property type="match status" value="1"/>
</dbReference>
<dbReference type="PROSITE" id="PS51003">
    <property type="entry name" value="CYTB_CTER"/>
    <property type="match status" value="1"/>
</dbReference>
<dbReference type="PROSITE" id="PS51002">
    <property type="entry name" value="CYTB_NTER"/>
    <property type="match status" value="1"/>
</dbReference>
<gene>
    <name type="primary">MT-CYB</name>
    <name type="synonym">COB</name>
    <name type="synonym">CYTB</name>
    <name type="synonym">MTCYB</name>
</gene>